<organism>
    <name type="scientific">Soil-borne wheat mosaic virus (strain United States/Nebraska/1981)</name>
    <name type="common">SBWMV</name>
    <dbReference type="NCBI Taxonomy" id="652673"/>
    <lineage>
        <taxon>Viruses</taxon>
        <taxon>Riboviria</taxon>
        <taxon>Orthornavirae</taxon>
        <taxon>Kitrinoviricota</taxon>
        <taxon>Alsuviricetes</taxon>
        <taxon>Martellivirales</taxon>
        <taxon>Virgaviridae</taxon>
        <taxon>Furovirus</taxon>
        <taxon>Soil-borne wheat mosaic virus</taxon>
    </lineage>
</organism>
<organismHost>
    <name type="scientific">Hordeum vulgare</name>
    <name type="common">Barley</name>
    <dbReference type="NCBI Taxonomy" id="4513"/>
</organismHost>
<organismHost>
    <name type="scientific">Triticum</name>
    <dbReference type="NCBI Taxonomy" id="4564"/>
</organismHost>
<keyword id="KW-0167">Capsid protein</keyword>
<keyword id="KW-1185">Reference proteome</keyword>
<keyword id="KW-0946">Virion</keyword>
<gene>
    <name type="primary">CP-CP2</name>
</gene>
<accession>Q89250</accession>
<dbReference type="EMBL" id="L07938">
    <property type="protein sequence ID" value="AAA48495.1"/>
    <property type="molecule type" value="Genomic_RNA"/>
</dbReference>
<dbReference type="RefSeq" id="NP_049338.1">
    <property type="nucleotide sequence ID" value="NC_002042.1"/>
</dbReference>
<dbReference type="KEGG" id="vg:991051"/>
<dbReference type="Proteomes" id="UP000009270">
    <property type="component" value="Genome"/>
</dbReference>
<dbReference type="GO" id="GO:0019028">
    <property type="term" value="C:viral capsid"/>
    <property type="evidence" value="ECO:0007669"/>
    <property type="project" value="UniProtKB-KW"/>
</dbReference>
<dbReference type="GO" id="GO:0005198">
    <property type="term" value="F:structural molecule activity"/>
    <property type="evidence" value="ECO:0007669"/>
    <property type="project" value="InterPro"/>
</dbReference>
<dbReference type="Gene3D" id="1.20.120.70">
    <property type="entry name" value="Tobacco mosaic virus-like, coat protein"/>
    <property type="match status" value="1"/>
</dbReference>
<dbReference type="InterPro" id="IPR001337">
    <property type="entry name" value="TMV-like_coat"/>
</dbReference>
<dbReference type="InterPro" id="IPR036417">
    <property type="entry name" value="TMV-like_coat_sf"/>
</dbReference>
<dbReference type="Pfam" id="PF00721">
    <property type="entry name" value="TMV_coat"/>
    <property type="match status" value="1"/>
</dbReference>
<proteinExistence type="inferred from homology"/>
<comment type="function">
    <text evidence="1 3">Minor capsid protein involved in virus transmission by the vector.</text>
</comment>
<comment type="subcellular location">
    <subcellularLocation>
        <location evidence="1">Virion</location>
    </subcellularLocation>
    <text evidence="1">Associated with one extremity of viral particles.</text>
</comment>
<comment type="miscellaneous">
    <text>This protein is translated as a fusion protein by episodic readthrough of the termination codon at the end of the capsid protein. Readthrough of the terminator codon TGA occurs between the codons for Ser-176 and Arg-178, thereby producing the 84 kDa readthrough protein.</text>
</comment>
<comment type="similarity">
    <text evidence="4">Belongs to the virgaviridae capsid protein family.</text>
</comment>
<feature type="chain" id="PRO_0000409452" description="84 kDa readthrough protein">
    <location>
        <begin position="1"/>
        <end position="754"/>
    </location>
</feature>
<feature type="region of interest" description="Disordered" evidence="2">
    <location>
        <begin position="103"/>
        <end position="131"/>
    </location>
</feature>
<feature type="region of interest" description="Disordered" evidence="2">
    <location>
        <begin position="713"/>
        <end position="740"/>
    </location>
</feature>
<feature type="compositionally biased region" description="Polar residues" evidence="2">
    <location>
        <begin position="713"/>
        <end position="730"/>
    </location>
</feature>
<reference key="1">
    <citation type="journal article" date="1993" name="Virology">
        <title>Complete nucleotide sequence and organization of the bipartite RNA genome of soil-borne wheat mosaic virus.</title>
        <authorList>
            <person name="Shirako Y."/>
            <person name="Wilson T.M."/>
        </authorList>
    </citation>
    <scope>NUCLEOTIDE SEQUENCE [GENOMIC RNA]</scope>
</reference>
<reference key="2">
    <citation type="journal article" date="2000" name="Virology">
        <title>Construction of full-length cDNA clones to Soil-borne wheat mosaic virus RNA1 and RNA2, from which infectious RNAs are transcribed in vitro: virion formation and systemic infection without expression of the N-terminal and C-terminal extensions to the capsid protein.</title>
        <authorList>
            <person name="Yamamiya A."/>
            <person name="Shirako Y."/>
        </authorList>
    </citation>
    <scope>IDENTIFICATION</scope>
    <scope>FUNCTION</scope>
    <source>
        <strain>-/Japan/JT/1982</strain>
    </source>
</reference>
<protein>
    <recommendedName>
        <fullName>84 kDa readthrough protein</fullName>
    </recommendedName>
    <alternativeName>
        <fullName>CP-RT</fullName>
    </alternativeName>
</protein>
<evidence type="ECO:0000250" key="1"/>
<evidence type="ECO:0000256" key="2">
    <source>
        <dbReference type="SAM" id="MobiDB-lite"/>
    </source>
</evidence>
<evidence type="ECO:0000269" key="3">
    <source>
    </source>
</evidence>
<evidence type="ECO:0000305" key="4"/>
<name>CPRT_SBWMN</name>
<sequence length="754" mass="83737">MAVNKGYTGYNKELNAMAATHAYIRLSTLMSQIESWQATRASVLTHLGVMLNGVSKLGERSFFSRTKRFGAHTSDGDEIFCDLGGEAVTQILSRLTVALQSARGEGAQTRNAKRGAAPGTSQVENEEQGQTDQTLAISNAVAELMIFVRTKDFTMNECYTQDSFEAKYNLKWEGSSXRDGVSGKLRAQIVEEFQNRLIIADDLGIFPRRDVDGVIIRNEPEVVYSELEDKLLSFESSVYHPKAVTVEFEVPVATGTTTTDDEITTEDVEMVIVTEVLVDDESDYYWLYFVLLLTSFLITCFILLSRRFIHFLGNRGGPGAPLCRRFATRLWSIRLWLLRKATRRYGNLGVVRKTHSQTTMRKYLRDYNFQLEEWETAIGCTPREALIVADQHILVRAVQRIVDSVGDVDSVDAVRKVFNGYKVRNFKIEKWLNKQTVNSALAVLNDSTVPENVVLSEGMLSLQTATFEEVLRCNVESQRESAYFNELIALQFAFRLVGTPEFSDFVLAYKGPAYPCYVEAINRHGTCIIQHHVDEDQKRKNDRAIEWLLMAGQGAFVVSSVVTTGVVVFKIHKWLKQRLLLRALSMLPSVGGGGNGGGGGSLPPQALELFDRAGTFEERLAALQNGLDLSPENMEVFTPEELKTEIRHVVQAYADSSYHVADEPYLRGVGVTVVTGLPEAVGEITTTGSEVSSVDTSISLGVPGRARRRAVSKNTRMYPSTSGQSYNSYKSPRVSGKSGVGSMKMKIASKPMAS</sequence>